<gene>
    <name evidence="1" type="primary">leuD</name>
    <name type="ordered locus">Bcer98_1126</name>
</gene>
<dbReference type="EC" id="4.2.1.33" evidence="1"/>
<dbReference type="EMBL" id="CP000764">
    <property type="protein sequence ID" value="ABS21452.1"/>
    <property type="molecule type" value="Genomic_DNA"/>
</dbReference>
<dbReference type="SMR" id="A7GMU4"/>
<dbReference type="STRING" id="315749.Bcer98_1126"/>
<dbReference type="KEGG" id="bcy:Bcer98_1126"/>
<dbReference type="eggNOG" id="COG0066">
    <property type="taxonomic scope" value="Bacteria"/>
</dbReference>
<dbReference type="HOGENOM" id="CLU_081378_0_3_9"/>
<dbReference type="UniPathway" id="UPA00048">
    <property type="reaction ID" value="UER00071"/>
</dbReference>
<dbReference type="Proteomes" id="UP000002300">
    <property type="component" value="Chromosome"/>
</dbReference>
<dbReference type="GO" id="GO:0009316">
    <property type="term" value="C:3-isopropylmalate dehydratase complex"/>
    <property type="evidence" value="ECO:0007669"/>
    <property type="project" value="InterPro"/>
</dbReference>
<dbReference type="GO" id="GO:0003861">
    <property type="term" value="F:3-isopropylmalate dehydratase activity"/>
    <property type="evidence" value="ECO:0007669"/>
    <property type="project" value="UniProtKB-UniRule"/>
</dbReference>
<dbReference type="GO" id="GO:0009098">
    <property type="term" value="P:L-leucine biosynthetic process"/>
    <property type="evidence" value="ECO:0007669"/>
    <property type="project" value="UniProtKB-UniRule"/>
</dbReference>
<dbReference type="CDD" id="cd01577">
    <property type="entry name" value="IPMI_Swivel"/>
    <property type="match status" value="1"/>
</dbReference>
<dbReference type="FunFam" id="3.20.19.10:FF:000003">
    <property type="entry name" value="3-isopropylmalate dehydratase small subunit"/>
    <property type="match status" value="1"/>
</dbReference>
<dbReference type="Gene3D" id="3.20.19.10">
    <property type="entry name" value="Aconitase, domain 4"/>
    <property type="match status" value="1"/>
</dbReference>
<dbReference type="HAMAP" id="MF_01031">
    <property type="entry name" value="LeuD_type1"/>
    <property type="match status" value="1"/>
</dbReference>
<dbReference type="InterPro" id="IPR004431">
    <property type="entry name" value="3-IsopropMal_deHydase_ssu"/>
</dbReference>
<dbReference type="InterPro" id="IPR015928">
    <property type="entry name" value="Aconitase/3IPM_dehydase_swvl"/>
</dbReference>
<dbReference type="InterPro" id="IPR000573">
    <property type="entry name" value="AconitaseA/IPMdHydase_ssu_swvl"/>
</dbReference>
<dbReference type="InterPro" id="IPR033940">
    <property type="entry name" value="IPMI_Swivel"/>
</dbReference>
<dbReference type="InterPro" id="IPR050075">
    <property type="entry name" value="LeuD"/>
</dbReference>
<dbReference type="NCBIfam" id="TIGR00171">
    <property type="entry name" value="leuD"/>
    <property type="match status" value="1"/>
</dbReference>
<dbReference type="NCBIfam" id="NF002458">
    <property type="entry name" value="PRK01641.1"/>
    <property type="match status" value="1"/>
</dbReference>
<dbReference type="PANTHER" id="PTHR43345:SF5">
    <property type="entry name" value="3-ISOPROPYLMALATE DEHYDRATASE SMALL SUBUNIT"/>
    <property type="match status" value="1"/>
</dbReference>
<dbReference type="PANTHER" id="PTHR43345">
    <property type="entry name" value="3-ISOPROPYLMALATE DEHYDRATASE SMALL SUBUNIT 2-RELATED-RELATED"/>
    <property type="match status" value="1"/>
</dbReference>
<dbReference type="Pfam" id="PF00694">
    <property type="entry name" value="Aconitase_C"/>
    <property type="match status" value="1"/>
</dbReference>
<dbReference type="SUPFAM" id="SSF52016">
    <property type="entry name" value="LeuD/IlvD-like"/>
    <property type="match status" value="1"/>
</dbReference>
<evidence type="ECO:0000255" key="1">
    <source>
        <dbReference type="HAMAP-Rule" id="MF_01031"/>
    </source>
</evidence>
<name>LEUD_BACCN</name>
<organism>
    <name type="scientific">Bacillus cytotoxicus (strain DSM 22905 / CIP 110041 / 391-98 / NVH 391-98)</name>
    <dbReference type="NCBI Taxonomy" id="315749"/>
    <lineage>
        <taxon>Bacteria</taxon>
        <taxon>Bacillati</taxon>
        <taxon>Bacillota</taxon>
        <taxon>Bacilli</taxon>
        <taxon>Bacillales</taxon>
        <taxon>Bacillaceae</taxon>
        <taxon>Bacillus</taxon>
        <taxon>Bacillus cereus group</taxon>
    </lineage>
</organism>
<keyword id="KW-0028">Amino-acid biosynthesis</keyword>
<keyword id="KW-0100">Branched-chain amino acid biosynthesis</keyword>
<keyword id="KW-0432">Leucine biosynthesis</keyword>
<keyword id="KW-0456">Lyase</keyword>
<accession>A7GMU4</accession>
<protein>
    <recommendedName>
        <fullName evidence="1">3-isopropylmalate dehydratase small subunit</fullName>
        <ecNumber evidence="1">4.2.1.33</ecNumber>
    </recommendedName>
    <alternativeName>
        <fullName evidence="1">Alpha-IPM isomerase</fullName>
        <shortName evidence="1">IPMI</shortName>
    </alternativeName>
    <alternativeName>
        <fullName evidence="1">Isopropylmalate isomerase</fullName>
    </alternativeName>
</protein>
<sequence>MMEPFRTHKGTVAVLMNDNIDTDQIIPKQYLKRIERTGFGKFLFDEWRYEEDRKENPHFPLNDPERKGASILITGENFGCGSSREHAPWALADYGFRVIIAGGFADIFYMNCMKNGMLPIVMDKETREKLAAIEARTIVEVDLENEVIMTTQHQFHFSIEKMWREKLLKGLDEIEITMQYEEYIQEYEEKVVH</sequence>
<proteinExistence type="inferred from homology"/>
<reference key="1">
    <citation type="journal article" date="2008" name="Chem. Biol. Interact.">
        <title>Extending the Bacillus cereus group genomics to putative food-borne pathogens of different toxicity.</title>
        <authorList>
            <person name="Lapidus A."/>
            <person name="Goltsman E."/>
            <person name="Auger S."/>
            <person name="Galleron N."/>
            <person name="Segurens B."/>
            <person name="Dossat C."/>
            <person name="Land M.L."/>
            <person name="Broussolle V."/>
            <person name="Brillard J."/>
            <person name="Guinebretiere M.-H."/>
            <person name="Sanchis V."/>
            <person name="Nguen-the C."/>
            <person name="Lereclus D."/>
            <person name="Richardson P."/>
            <person name="Wincker P."/>
            <person name="Weissenbach J."/>
            <person name="Ehrlich S.D."/>
            <person name="Sorokin A."/>
        </authorList>
    </citation>
    <scope>NUCLEOTIDE SEQUENCE [LARGE SCALE GENOMIC DNA]</scope>
    <source>
        <strain>DSM 22905 / CIP 110041 / 391-98 / NVH 391-98</strain>
    </source>
</reference>
<feature type="chain" id="PRO_1000084244" description="3-isopropylmalate dehydratase small subunit">
    <location>
        <begin position="1"/>
        <end position="193"/>
    </location>
</feature>
<comment type="function">
    <text evidence="1">Catalyzes the isomerization between 2-isopropylmalate and 3-isopropylmalate, via the formation of 2-isopropylmaleate.</text>
</comment>
<comment type="catalytic activity">
    <reaction evidence="1">
        <text>(2R,3S)-3-isopropylmalate = (2S)-2-isopropylmalate</text>
        <dbReference type="Rhea" id="RHEA:32287"/>
        <dbReference type="ChEBI" id="CHEBI:1178"/>
        <dbReference type="ChEBI" id="CHEBI:35121"/>
        <dbReference type="EC" id="4.2.1.33"/>
    </reaction>
</comment>
<comment type="pathway">
    <text evidence="1">Amino-acid biosynthesis; L-leucine biosynthesis; L-leucine from 3-methyl-2-oxobutanoate: step 2/4.</text>
</comment>
<comment type="subunit">
    <text evidence="1">Heterodimer of LeuC and LeuD.</text>
</comment>
<comment type="similarity">
    <text evidence="1">Belongs to the LeuD family. LeuD type 1 subfamily.</text>
</comment>